<accession>Q29608</accession>
<keyword id="KW-0256">Endoplasmic reticulum</keyword>
<keyword id="KW-0325">Glycoprotein</keyword>
<keyword id="KW-0443">Lipid metabolism</keyword>
<keyword id="KW-0472">Membrane</keyword>
<keyword id="KW-0521">NADP</keyword>
<keyword id="KW-0560">Oxidoreductase</keyword>
<keyword id="KW-0735">Signal-anchor</keyword>
<keyword id="KW-0753">Steroid metabolism</keyword>
<keyword id="KW-0812">Transmembrane</keyword>
<keyword id="KW-1133">Transmembrane helix</keyword>
<gene>
    <name type="primary">HSD11B1</name>
</gene>
<feature type="chain" id="PRO_0000054624" description="11-beta-hydroxysteroid dehydrogenase 1">
    <location>
        <begin position="1"/>
        <end position="291"/>
    </location>
</feature>
<feature type="topological domain" description="Cytoplasmic" evidence="4">
    <location>
        <begin position="1"/>
        <end position="7"/>
    </location>
</feature>
<feature type="transmembrane region" description="Helical; Signal-anchor for type II membrane protein" evidence="4">
    <location>
        <begin position="8"/>
        <end position="24"/>
    </location>
</feature>
<feature type="topological domain" description="Lumenal" evidence="4">
    <location>
        <begin position="25"/>
        <end position="291"/>
    </location>
</feature>
<feature type="active site" description="Proton acceptor" evidence="5">
    <location>
        <position position="183"/>
    </location>
</feature>
<feature type="binding site" evidence="2">
    <location>
        <begin position="41"/>
        <end position="67"/>
    </location>
    <ligand>
        <name>NADP(+)</name>
        <dbReference type="ChEBI" id="CHEBI:58349"/>
    </ligand>
</feature>
<feature type="binding site" evidence="2">
    <location>
        <begin position="92"/>
        <end position="93"/>
    </location>
    <ligand>
        <name>NADP(+)</name>
        <dbReference type="ChEBI" id="CHEBI:58349"/>
    </ligand>
</feature>
<feature type="binding site" evidence="2">
    <location>
        <begin position="119"/>
        <end position="121"/>
    </location>
    <ligand>
        <name>NADP(+)</name>
        <dbReference type="ChEBI" id="CHEBI:58349"/>
    </ligand>
</feature>
<feature type="binding site" evidence="1">
    <location>
        <position position="170"/>
    </location>
    <ligand>
        <name>substrate</name>
    </ligand>
</feature>
<feature type="binding site" evidence="2">
    <location>
        <begin position="183"/>
        <end position="187"/>
    </location>
    <ligand>
        <name>NADP(+)</name>
        <dbReference type="ChEBI" id="CHEBI:58349"/>
    </ligand>
</feature>
<feature type="binding site" evidence="2">
    <location>
        <begin position="218"/>
        <end position="222"/>
    </location>
    <ligand>
        <name>NADP(+)</name>
        <dbReference type="ChEBI" id="CHEBI:58349"/>
    </ligand>
</feature>
<feature type="glycosylation site" description="N-linked (GlcNAc...) asparagine" evidence="4">
    <location>
        <position position="123"/>
    </location>
</feature>
<feature type="glycosylation site" description="N-linked (GlcNAc...) asparagine" evidence="4">
    <location>
        <position position="162"/>
    </location>
</feature>
<feature type="glycosylation site" description="N-linked (GlcNAc...) asparagine" evidence="4">
    <location>
        <position position="207"/>
    </location>
</feature>
<name>DHI1_SAISC</name>
<proteinExistence type="evidence at protein level"/>
<dbReference type="EC" id="1.1.1.146" evidence="6"/>
<dbReference type="EC" id="1.1.1.201" evidence="2"/>
<dbReference type="EMBL" id="S63400">
    <property type="protein sequence ID" value="AAB27374.1"/>
    <property type="molecule type" value="mRNA"/>
</dbReference>
<dbReference type="SMR" id="Q29608"/>
<dbReference type="GlyCosmos" id="Q29608">
    <property type="glycosylation" value="3 sites, No reported glycans"/>
</dbReference>
<dbReference type="GO" id="GO:0005789">
    <property type="term" value="C:endoplasmic reticulum membrane"/>
    <property type="evidence" value="ECO:0007669"/>
    <property type="project" value="UniProtKB-SubCell"/>
</dbReference>
<dbReference type="GO" id="GO:0047022">
    <property type="term" value="F:7-beta-hydroxysteroid dehydrogenase (NADP+) activity"/>
    <property type="evidence" value="ECO:0007669"/>
    <property type="project" value="RHEA"/>
</dbReference>
<dbReference type="GO" id="GO:0102196">
    <property type="term" value="F:cortisol dehydrogenase (NAD+) activity"/>
    <property type="evidence" value="ECO:0007669"/>
    <property type="project" value="RHEA"/>
</dbReference>
<dbReference type="GO" id="GO:0005496">
    <property type="term" value="F:steroid binding"/>
    <property type="evidence" value="ECO:0007669"/>
    <property type="project" value="TreeGrafter"/>
</dbReference>
<dbReference type="GO" id="GO:0006706">
    <property type="term" value="P:steroid catabolic process"/>
    <property type="evidence" value="ECO:0007669"/>
    <property type="project" value="TreeGrafter"/>
</dbReference>
<dbReference type="CDD" id="cd05332">
    <property type="entry name" value="11beta-HSD1_like_SDR_c"/>
    <property type="match status" value="1"/>
</dbReference>
<dbReference type="FunFam" id="3.40.50.720:FF:000329">
    <property type="entry name" value="Corticosteroid 11-beta-dehydrogenase isozyme 1"/>
    <property type="match status" value="1"/>
</dbReference>
<dbReference type="Gene3D" id="3.40.50.720">
    <property type="entry name" value="NAD(P)-binding Rossmann-like Domain"/>
    <property type="match status" value="1"/>
</dbReference>
<dbReference type="InterPro" id="IPR051253">
    <property type="entry name" value="11-beta-HSD"/>
</dbReference>
<dbReference type="InterPro" id="IPR036291">
    <property type="entry name" value="NAD(P)-bd_dom_sf"/>
</dbReference>
<dbReference type="InterPro" id="IPR020904">
    <property type="entry name" value="Sc_DH/Rdtase_CS"/>
</dbReference>
<dbReference type="InterPro" id="IPR002347">
    <property type="entry name" value="SDR_fam"/>
</dbReference>
<dbReference type="PANTHER" id="PTHR44279:SF1">
    <property type="entry name" value="11-BETA-HYDROXYSTEROID DEHYDROGENASE 1"/>
    <property type="match status" value="1"/>
</dbReference>
<dbReference type="PANTHER" id="PTHR44279">
    <property type="entry name" value="HYDROXYSTEROID (11-BETA) DEHYDROGENASE 1-LIKE B-RELATED"/>
    <property type="match status" value="1"/>
</dbReference>
<dbReference type="Pfam" id="PF00106">
    <property type="entry name" value="adh_short"/>
    <property type="match status" value="1"/>
</dbReference>
<dbReference type="PRINTS" id="PR00081">
    <property type="entry name" value="GDHRDH"/>
</dbReference>
<dbReference type="SUPFAM" id="SSF51735">
    <property type="entry name" value="NAD(P)-binding Rossmann-fold domains"/>
    <property type="match status" value="1"/>
</dbReference>
<dbReference type="PROSITE" id="PS00061">
    <property type="entry name" value="ADH_SHORT"/>
    <property type="match status" value="1"/>
</dbReference>
<protein>
    <recommendedName>
        <fullName evidence="7">11-beta-hydroxysteroid dehydrogenase 1</fullName>
        <shortName>11-DH</shortName>
        <shortName evidence="7">11-beta-HSD1</shortName>
        <ecNumber evidence="6">1.1.1.146</ecNumber>
    </recommendedName>
    <alternativeName>
        <fullName>7-oxosteroid reductase</fullName>
        <ecNumber evidence="2">1.1.1.201</ecNumber>
    </alternativeName>
    <alternativeName>
        <fullName>Corticosteroid 11-beta-dehydrogenase isozyme 1</fullName>
    </alternativeName>
</protein>
<comment type="function">
    <text evidence="2 3 6 7">Controls the reversible conversion of biologically active glucocorticoids such as cortisone to cortisol, and 11-dehydrocorticosterone to corticosterone in the presence of NADP(H) (PubMed:8319583). Participates in the corticosteroid receptor-mediated anti-inflammatory response, as well as metabolic and homeostatic processes (PubMed:8319583). Bidirectional in vitro, predominantly functions as a reductase in vivo, thereby increasing the concentration of active glucocorticoids (PubMed:8319583). It has broad substrate specificity, besides glucocorticoids, it accepts other steroid and sterol substrates. Interconverts 7-oxo- and 7-hydroxy-neurosteroids such as 7-oxopregnenolone and 7beta-hydroxypregnenolone, 7-oxodehydroepiandrosterone (3beta-hydroxy-5-androstene-7,17-dione) and 7beta-hydroxydehydroepiandrosterone (3beta,7beta-dihydroxyandrost-5-en-17-one), among others (By similarity). Catalyzes the stereo-specific conversion of the major dietary oxysterol, 7-ketocholesterol (7-oxocholesterol), into the more polar 7-beta-hydroxycholesterol metabolite. 7-oxocholesterol is one of the most important oxysterols, it participates in several events such as induction of apoptosis, accumulation in atherosclerotic lesions, lipid peroxidation, and induction of foam cell formation (By similarity). Mediates the 7-oxo reduction of 7-oxolithocholate mainly to chenodeoxycholate, and to a lesser extent to ursodeoxycholate, both in its free form and when conjugated to glycine or taurine, providing a link between glucocorticoid activation and bile acid metabolism (By similarity). Catalyzes the synthesis of 7-beta-25-dihydroxycholesterol from 7-oxo-25-hydroxycholesterol in vitro, which acts as a ligand for the G-protein-coupled receptor (GPCR) Epstein-Barr virus-induced gene 2 (EBI2) and may thereby regulate immune cell migration (By similarity).</text>
</comment>
<comment type="catalytic activity">
    <reaction evidence="6">
        <text>an 11beta-hydroxysteroid + NADP(+) = an 11-oxosteroid + NADPH + H(+)</text>
        <dbReference type="Rhea" id="RHEA:11388"/>
        <dbReference type="ChEBI" id="CHEBI:15378"/>
        <dbReference type="ChEBI" id="CHEBI:35346"/>
        <dbReference type="ChEBI" id="CHEBI:47787"/>
        <dbReference type="ChEBI" id="CHEBI:57783"/>
        <dbReference type="ChEBI" id="CHEBI:58349"/>
        <dbReference type="EC" id="1.1.1.146"/>
    </reaction>
    <physiologicalReaction direction="left-to-right" evidence="6">
        <dbReference type="Rhea" id="RHEA:11389"/>
    </physiologicalReaction>
    <physiologicalReaction direction="right-to-left" evidence="6">
        <dbReference type="Rhea" id="RHEA:11390"/>
    </physiologicalReaction>
</comment>
<comment type="catalytic activity">
    <reaction evidence="6">
        <text>cortisone + NADPH + H(+) = cortisol + NADP(+)</text>
        <dbReference type="Rhea" id="RHEA:68616"/>
        <dbReference type="ChEBI" id="CHEBI:15378"/>
        <dbReference type="ChEBI" id="CHEBI:16962"/>
        <dbReference type="ChEBI" id="CHEBI:17650"/>
        <dbReference type="ChEBI" id="CHEBI:57783"/>
        <dbReference type="ChEBI" id="CHEBI:58349"/>
    </reaction>
    <physiologicalReaction direction="left-to-right" evidence="6">
        <dbReference type="Rhea" id="RHEA:68617"/>
    </physiologicalReaction>
    <physiologicalReaction direction="right-to-left" evidence="6">
        <dbReference type="Rhea" id="RHEA:68618"/>
    </physiologicalReaction>
</comment>
<comment type="catalytic activity">
    <reaction evidence="2">
        <text>corticosterone + NADP(+) = 11-dehydrocorticosterone + NADPH + H(+)</text>
        <dbReference type="Rhea" id="RHEA:42200"/>
        <dbReference type="ChEBI" id="CHEBI:15378"/>
        <dbReference type="ChEBI" id="CHEBI:16827"/>
        <dbReference type="ChEBI" id="CHEBI:57783"/>
        <dbReference type="ChEBI" id="CHEBI:58349"/>
        <dbReference type="ChEBI" id="CHEBI:78600"/>
    </reaction>
    <physiologicalReaction direction="left-to-right" evidence="2">
        <dbReference type="Rhea" id="RHEA:42201"/>
    </physiologicalReaction>
    <physiologicalReaction direction="right-to-left" evidence="2">
        <dbReference type="Rhea" id="RHEA:42202"/>
    </physiologicalReaction>
</comment>
<comment type="catalytic activity">
    <reaction evidence="2">
        <text>a 7beta-hydroxysteroid + NADP(+) = a 7-oxosteroid + NADPH + H(+)</text>
        <dbReference type="Rhea" id="RHEA:20233"/>
        <dbReference type="ChEBI" id="CHEBI:15378"/>
        <dbReference type="ChEBI" id="CHEBI:35349"/>
        <dbReference type="ChEBI" id="CHEBI:47789"/>
        <dbReference type="ChEBI" id="CHEBI:57783"/>
        <dbReference type="ChEBI" id="CHEBI:58349"/>
        <dbReference type="EC" id="1.1.1.201"/>
    </reaction>
    <physiologicalReaction direction="right-to-left" evidence="2">
        <dbReference type="Rhea" id="RHEA:20235"/>
    </physiologicalReaction>
</comment>
<comment type="catalytic activity">
    <reaction evidence="2">
        <text>7-oxocholesterol + NADPH + H(+) = 7beta-hydroxycholesterol + NADP(+)</text>
        <dbReference type="Rhea" id="RHEA:68656"/>
        <dbReference type="ChEBI" id="CHEBI:15378"/>
        <dbReference type="ChEBI" id="CHEBI:42989"/>
        <dbReference type="ChEBI" id="CHEBI:57783"/>
        <dbReference type="ChEBI" id="CHEBI:58349"/>
        <dbReference type="ChEBI" id="CHEBI:64294"/>
    </reaction>
    <physiologicalReaction direction="left-to-right" evidence="2">
        <dbReference type="Rhea" id="RHEA:68657"/>
    </physiologicalReaction>
</comment>
<comment type="catalytic activity">
    <reaction evidence="2">
        <text>chenodeoxycholate + NADP(+) = 7-oxolithocholate + NADPH + H(+)</text>
        <dbReference type="Rhea" id="RHEA:53820"/>
        <dbReference type="ChEBI" id="CHEBI:15378"/>
        <dbReference type="ChEBI" id="CHEBI:36234"/>
        <dbReference type="ChEBI" id="CHEBI:57783"/>
        <dbReference type="ChEBI" id="CHEBI:58349"/>
        <dbReference type="ChEBI" id="CHEBI:78605"/>
    </reaction>
    <physiologicalReaction direction="right-to-left" evidence="2">
        <dbReference type="Rhea" id="RHEA:53822"/>
    </physiologicalReaction>
</comment>
<comment type="catalytic activity">
    <reaction evidence="2">
        <text>7-oxolithocholate + NADPH + H(+) = ursodeoxycholate + NADP(+)</text>
        <dbReference type="Rhea" id="RHEA:47540"/>
        <dbReference type="ChEBI" id="CHEBI:15378"/>
        <dbReference type="ChEBI" id="CHEBI:57783"/>
        <dbReference type="ChEBI" id="CHEBI:58349"/>
        <dbReference type="ChEBI" id="CHEBI:78604"/>
        <dbReference type="ChEBI" id="CHEBI:78605"/>
    </reaction>
    <physiologicalReaction direction="left-to-right" evidence="2">
        <dbReference type="Rhea" id="RHEA:47541"/>
    </physiologicalReaction>
</comment>
<comment type="catalytic activity">
    <reaction evidence="2">
        <text>glycochenodeoxycholate + NADP(+) = 7-oxoglycolithocholate + NADPH + H(+)</text>
        <dbReference type="Rhea" id="RHEA:65056"/>
        <dbReference type="ChEBI" id="CHEBI:15378"/>
        <dbReference type="ChEBI" id="CHEBI:36252"/>
        <dbReference type="ChEBI" id="CHEBI:57783"/>
        <dbReference type="ChEBI" id="CHEBI:58349"/>
        <dbReference type="ChEBI" id="CHEBI:137818"/>
    </reaction>
    <physiologicalReaction direction="right-to-left" evidence="2">
        <dbReference type="Rhea" id="RHEA:65058"/>
    </physiologicalReaction>
</comment>
<comment type="catalytic activity">
    <reaction evidence="2">
        <text>taurochenodeoxycholate + NADP(+) = 7-oxotaurolithocholate + NADPH + H(+)</text>
        <dbReference type="Rhea" id="RHEA:65060"/>
        <dbReference type="ChEBI" id="CHEBI:9407"/>
        <dbReference type="ChEBI" id="CHEBI:15378"/>
        <dbReference type="ChEBI" id="CHEBI:57783"/>
        <dbReference type="ChEBI" id="CHEBI:58349"/>
        <dbReference type="ChEBI" id="CHEBI:137724"/>
    </reaction>
    <physiologicalReaction direction="right-to-left" evidence="2">
        <dbReference type="Rhea" id="RHEA:65062"/>
    </physiologicalReaction>
</comment>
<comment type="catalytic activity">
    <reaction evidence="2">
        <text>tauroursodeoxycholate + NADP(+) = 7-oxotaurolithocholate + NADPH + H(+)</text>
        <dbReference type="Rhea" id="RHEA:68980"/>
        <dbReference type="ChEBI" id="CHEBI:15378"/>
        <dbReference type="ChEBI" id="CHEBI:57783"/>
        <dbReference type="ChEBI" id="CHEBI:58349"/>
        <dbReference type="ChEBI" id="CHEBI:132028"/>
        <dbReference type="ChEBI" id="CHEBI:137724"/>
    </reaction>
    <physiologicalReaction direction="right-to-left" evidence="2">
        <dbReference type="Rhea" id="RHEA:68982"/>
    </physiologicalReaction>
</comment>
<comment type="catalytic activity">
    <reaction evidence="2">
        <text>glycoursodeoxycholate + NADP(+) = 7-oxoglycolithocholate + NADPH + H(+)</text>
        <dbReference type="Rhea" id="RHEA:68976"/>
        <dbReference type="ChEBI" id="CHEBI:15378"/>
        <dbReference type="ChEBI" id="CHEBI:57783"/>
        <dbReference type="ChEBI" id="CHEBI:58349"/>
        <dbReference type="ChEBI" id="CHEBI:132030"/>
        <dbReference type="ChEBI" id="CHEBI:137818"/>
    </reaction>
    <physiologicalReaction direction="right-to-left" evidence="2">
        <dbReference type="Rhea" id="RHEA:68978"/>
    </physiologicalReaction>
</comment>
<comment type="catalytic activity">
    <reaction evidence="2">
        <text>7-oxopregnenolone + NADPH + H(+) = 7beta-hydroxypregnenolone + NADP(+)</text>
        <dbReference type="Rhea" id="RHEA:69436"/>
        <dbReference type="ChEBI" id="CHEBI:15378"/>
        <dbReference type="ChEBI" id="CHEBI:57783"/>
        <dbReference type="ChEBI" id="CHEBI:58349"/>
        <dbReference type="ChEBI" id="CHEBI:183806"/>
        <dbReference type="ChEBI" id="CHEBI:183807"/>
    </reaction>
    <physiologicalReaction direction="left-to-right" evidence="2">
        <dbReference type="Rhea" id="RHEA:69437"/>
    </physiologicalReaction>
</comment>
<comment type="catalytic activity">
    <reaction evidence="2">
        <text>3beta,7alpha-dihydroxyandrost-5-en-17-one + NADP(+) = 3beta-hydroxy-5-androstene-7,17-dione + NADPH + H(+)</text>
        <dbReference type="Rhea" id="RHEA:69440"/>
        <dbReference type="ChEBI" id="CHEBI:15378"/>
        <dbReference type="ChEBI" id="CHEBI:57783"/>
        <dbReference type="ChEBI" id="CHEBI:58349"/>
        <dbReference type="ChEBI" id="CHEBI:81471"/>
        <dbReference type="ChEBI" id="CHEBI:183808"/>
    </reaction>
    <physiologicalReaction direction="left-to-right" evidence="2">
        <dbReference type="Rhea" id="RHEA:69441"/>
    </physiologicalReaction>
</comment>
<comment type="catalytic activity">
    <reaction evidence="2">
        <text>3beta-hydroxy-5-androstene-7,17-dione + NADPH + H(+) = 3beta,7beta-dihydroxyandrost-5-en-17-one + NADP(+)</text>
        <dbReference type="Rhea" id="RHEA:69452"/>
        <dbReference type="ChEBI" id="CHEBI:15378"/>
        <dbReference type="ChEBI" id="CHEBI:57783"/>
        <dbReference type="ChEBI" id="CHEBI:58349"/>
        <dbReference type="ChEBI" id="CHEBI:183368"/>
        <dbReference type="ChEBI" id="CHEBI:183808"/>
    </reaction>
    <physiologicalReaction direction="left-to-right" evidence="2">
        <dbReference type="Rhea" id="RHEA:69453"/>
    </physiologicalReaction>
</comment>
<comment type="catalytic activity">
    <reaction evidence="2">
        <text>3beta-hydroxy-5alpha-androstane-7,17-dione + NADPH + H(+) = 3beta,7beta-dihydroxy-5alpha-androstan-17-one + NADP(+)</text>
        <dbReference type="Rhea" id="RHEA:69456"/>
        <dbReference type="ChEBI" id="CHEBI:15378"/>
        <dbReference type="ChEBI" id="CHEBI:57783"/>
        <dbReference type="ChEBI" id="CHEBI:58349"/>
        <dbReference type="ChEBI" id="CHEBI:79834"/>
        <dbReference type="ChEBI" id="CHEBI:183809"/>
    </reaction>
    <physiologicalReaction direction="left-to-right" evidence="2">
        <dbReference type="Rhea" id="RHEA:69457"/>
    </physiologicalReaction>
</comment>
<comment type="biophysicochemical properties">
    <kinetics>
        <KM evidence="6">1.89 uM for cortisol</KM>
        <KM evidence="6">0.272 uM for cortisone</KM>
        <Vmax evidence="6">2490.0 nmol/h/ug enzyme with cortisol as substrate</Vmax>
        <Vmax evidence="6">0.376 nmol/h/ug enzyme with cortisone as substrate</Vmax>
    </kinetics>
</comment>
<comment type="pathway">
    <text evidence="2">Steroid metabolism.</text>
</comment>
<comment type="subunit">
    <text evidence="2">Homodimer.</text>
</comment>
<comment type="subcellular location">
    <subcellularLocation>
        <location>Endoplasmic reticulum membrane</location>
        <topology>Single-pass type II membrane protein</topology>
    </subcellularLocation>
</comment>
<comment type="tissue specificity">
    <text evidence="6">Abundantly expressed in the liver, followed by fibroblasts, also detected in the brain, lung, heart, and ovary, and in smaller amounts in kidney, skin, and spleen.</text>
</comment>
<comment type="similarity">
    <text evidence="8">Belongs to the short-chain dehydrogenases/reductases (SDR) family.</text>
</comment>
<evidence type="ECO:0000250" key="1"/>
<evidence type="ECO:0000250" key="2">
    <source>
        <dbReference type="UniProtKB" id="P28845"/>
    </source>
</evidence>
<evidence type="ECO:0000250" key="3">
    <source>
        <dbReference type="UniProtKB" id="P50172"/>
    </source>
</evidence>
<evidence type="ECO:0000255" key="4"/>
<evidence type="ECO:0000255" key="5">
    <source>
        <dbReference type="PROSITE-ProRule" id="PRU10001"/>
    </source>
</evidence>
<evidence type="ECO:0000269" key="6">
    <source>
    </source>
</evidence>
<evidence type="ECO:0000303" key="7">
    <source>
    </source>
</evidence>
<evidence type="ECO:0000305" key="8"/>
<organism>
    <name type="scientific">Saimiri sciureus</name>
    <name type="common">Common squirrel monkey</name>
    <dbReference type="NCBI Taxonomy" id="9521"/>
    <lineage>
        <taxon>Eukaryota</taxon>
        <taxon>Metazoa</taxon>
        <taxon>Chordata</taxon>
        <taxon>Craniata</taxon>
        <taxon>Vertebrata</taxon>
        <taxon>Euteleostomi</taxon>
        <taxon>Mammalia</taxon>
        <taxon>Eutheria</taxon>
        <taxon>Euarchontoglires</taxon>
        <taxon>Primates</taxon>
        <taxon>Haplorrhini</taxon>
        <taxon>Platyrrhini</taxon>
        <taxon>Cebidae</taxon>
        <taxon>Saimiriinae</taxon>
        <taxon>Saimiri</taxon>
    </lineage>
</organism>
<sequence>MAFMKTHLLPILGLFMAYYYYSAYEEFRPEMLQGKKVIVTGASKGIGREMAYHLAKMGAHVVVTARSKETLQKVVSHCLELGAASAHYIAGTMEDMTFAEQFVAQAGKLMGGLDMLILNHITNTSLNFFHDDIHHVRKSMEVNFLSYVVLTVAAMPMLKQSNGSIVIVSSVAGKVAYPMISAYSASKFALYGFFSSIRKEYLMSEVNVSITLCVLGLIDTDTAMKAVSGIIKMQAARKEECALEIIKGGVLRQEEVYYDRSLWTTLLLRNPSRKILEFLRSTSYSTDGLIN</sequence>
<reference key="1">
    <citation type="journal article" date="1993" name="Endocrinology">
        <title>Structure and function of the hepatic form of 11 beta-hydroxysteroid dehydrogenase in the squirrel monkey, an animal model of glucocorticoid resistance.</title>
        <authorList>
            <person name="Moore C.C."/>
            <person name="Mellon S.H."/>
            <person name="Murai J."/>
            <person name="Siiteri P.K."/>
            <person name="Miller W.L."/>
        </authorList>
    </citation>
    <scope>NUCLEOTIDE SEQUENCE [MRNA]</scope>
    <scope>FUNCTION</scope>
    <scope>CATALYTIC ACTIVITY</scope>
    <scope>TISSUE SPECIFICITY</scope>
    <scope>BIOPHYSICOCHEMICAL PROPERTIES</scope>
</reference>